<keyword id="KW-0030">Aminoacyl-tRNA synthetase</keyword>
<keyword id="KW-0067">ATP-binding</keyword>
<keyword id="KW-0963">Cytoplasm</keyword>
<keyword id="KW-0436">Ligase</keyword>
<keyword id="KW-0547">Nucleotide-binding</keyword>
<keyword id="KW-0648">Protein biosynthesis</keyword>
<evidence type="ECO:0000255" key="1">
    <source>
        <dbReference type="HAMAP-Rule" id="MF_00049"/>
    </source>
</evidence>
<feature type="chain" id="PRO_0000152100" description="Leucine--tRNA ligase">
    <location>
        <begin position="1"/>
        <end position="833"/>
    </location>
</feature>
<feature type="short sequence motif" description="'HIGH' region">
    <location>
        <begin position="41"/>
        <end position="52"/>
    </location>
</feature>
<feature type="short sequence motif" description="'KMSKS' region">
    <location>
        <begin position="610"/>
        <end position="614"/>
    </location>
</feature>
<feature type="binding site" evidence="1">
    <location>
        <position position="613"/>
    </location>
    <ligand>
        <name>ATP</name>
        <dbReference type="ChEBI" id="CHEBI:30616"/>
    </ligand>
</feature>
<gene>
    <name evidence="1" type="primary">leuS</name>
    <name type="ordered locus">spyM18_0171</name>
</gene>
<name>SYL_STRP8</name>
<sequence length="833" mass="93731">MTFYDHTAIEPKWQAFWADNHTFKTGTDASKPKFYALDMFPYPSGAGLHVGHPEGYTATDILSRFKRAQGHNVLHPMGWDAFGLPAEQYAMDTGNDPAEFTAENIANFKRQINALGFSYDWDREVNTTDPNYYKWTQWIFTKLYEKGLAYEAEVPVNWVEELGTAIANEEVLPDGTSERGGYPVVRKPMRQWMLKITAYAERLLEDLEEVDWPESIKDMQRNWIGKSTGANVTFKVKDTDKDFTVFTTRPDTLFGATYAVLAPEHALVDAITTADQAEAVADYKRQASLKSDLARTDLAKEKTGVWTGSYAINPVNGNEMPVWIADYVLASYGTGAIMAVPAHDERDWEFAKQFNLDIIPVLEGGNVEEAAFTEDGLHINSGFLDGLDKASAIAKMVEWLEAEGVGNEKVTYRLRDWLFSRQRYWGEPIPIIHWEDGTSTAVPESELPLVLPVTKDIRPSGTGESPLANVTDWLEVTREDGVKGRRETNTMPQWAGSSWYYLRYIDPHNTEKLADEELLKQWLPVDIYVGGAEHAVLHLLYARFWHKVLYDLGVVPTKEPFQKLFNQGMILGTSYRDSRGALVATDKVEKRDGSFFHLETGEELEQAPAKMSKSLKNVVNPDDVVEQYGADTLRVYEMFMGPLDASIAWSEEGLEGSRKFLDRVYRLVTTKEIVAENSGALDKVYNETVKAVTEQVDQMKFNTAIAQLMVFVNAANKEDKLFSDYAKGFVQLIAPFAPHLGEELWQALTASGESISYVPWPSYDESKLVENDVEIVVQIKGKVKAKLVVAKDLSREELQEVALANEKVQAEIAGKDIIKVIAVPNKLVNIVIK</sequence>
<proteinExistence type="inferred from homology"/>
<comment type="catalytic activity">
    <reaction evidence="1">
        <text>tRNA(Leu) + L-leucine + ATP = L-leucyl-tRNA(Leu) + AMP + diphosphate</text>
        <dbReference type="Rhea" id="RHEA:11688"/>
        <dbReference type="Rhea" id="RHEA-COMP:9613"/>
        <dbReference type="Rhea" id="RHEA-COMP:9622"/>
        <dbReference type="ChEBI" id="CHEBI:30616"/>
        <dbReference type="ChEBI" id="CHEBI:33019"/>
        <dbReference type="ChEBI" id="CHEBI:57427"/>
        <dbReference type="ChEBI" id="CHEBI:78442"/>
        <dbReference type="ChEBI" id="CHEBI:78494"/>
        <dbReference type="ChEBI" id="CHEBI:456215"/>
        <dbReference type="EC" id="6.1.1.4"/>
    </reaction>
</comment>
<comment type="subcellular location">
    <subcellularLocation>
        <location evidence="1">Cytoplasm</location>
    </subcellularLocation>
</comment>
<comment type="similarity">
    <text evidence="1">Belongs to the class-I aminoacyl-tRNA synthetase family.</text>
</comment>
<organism>
    <name type="scientific">Streptococcus pyogenes serotype M18 (strain MGAS8232)</name>
    <dbReference type="NCBI Taxonomy" id="186103"/>
    <lineage>
        <taxon>Bacteria</taxon>
        <taxon>Bacillati</taxon>
        <taxon>Bacillota</taxon>
        <taxon>Bacilli</taxon>
        <taxon>Lactobacillales</taxon>
        <taxon>Streptococcaceae</taxon>
        <taxon>Streptococcus</taxon>
    </lineage>
</organism>
<reference key="1">
    <citation type="journal article" date="2002" name="Proc. Natl. Acad. Sci. U.S.A.">
        <title>Genome sequence and comparative microarray analysis of serotype M18 group A Streptococcus strains associated with acute rheumatic fever outbreaks.</title>
        <authorList>
            <person name="Smoot J.C."/>
            <person name="Barbian K.D."/>
            <person name="Van Gompel J.J."/>
            <person name="Smoot L.M."/>
            <person name="Chaussee M.S."/>
            <person name="Sylva G.L."/>
            <person name="Sturdevant D.E."/>
            <person name="Ricklefs S.M."/>
            <person name="Porcella S.F."/>
            <person name="Parkins L.D."/>
            <person name="Beres S.B."/>
            <person name="Campbell D.S."/>
            <person name="Smith T.M."/>
            <person name="Zhang Q."/>
            <person name="Kapur V."/>
            <person name="Daly J.A."/>
            <person name="Veasy L.G."/>
            <person name="Musser J.M."/>
        </authorList>
    </citation>
    <scope>NUCLEOTIDE SEQUENCE [LARGE SCALE GENOMIC DNA]</scope>
    <source>
        <strain>MGAS8232</strain>
    </source>
</reference>
<accession>Q8P2T2</accession>
<dbReference type="EC" id="6.1.1.4" evidence="1"/>
<dbReference type="EMBL" id="AE009949">
    <property type="protein sequence ID" value="AAL96973.1"/>
    <property type="molecule type" value="Genomic_DNA"/>
</dbReference>
<dbReference type="RefSeq" id="WP_011017288.1">
    <property type="nucleotide sequence ID" value="NC_003485.1"/>
</dbReference>
<dbReference type="SMR" id="Q8P2T2"/>
<dbReference type="KEGG" id="spm:spyM18_0171"/>
<dbReference type="HOGENOM" id="CLU_004427_0_0_9"/>
<dbReference type="GO" id="GO:0005829">
    <property type="term" value="C:cytosol"/>
    <property type="evidence" value="ECO:0007669"/>
    <property type="project" value="TreeGrafter"/>
</dbReference>
<dbReference type="GO" id="GO:0002161">
    <property type="term" value="F:aminoacyl-tRNA deacylase activity"/>
    <property type="evidence" value="ECO:0007669"/>
    <property type="project" value="InterPro"/>
</dbReference>
<dbReference type="GO" id="GO:0005524">
    <property type="term" value="F:ATP binding"/>
    <property type="evidence" value="ECO:0007669"/>
    <property type="project" value="UniProtKB-UniRule"/>
</dbReference>
<dbReference type="GO" id="GO:0004823">
    <property type="term" value="F:leucine-tRNA ligase activity"/>
    <property type="evidence" value="ECO:0007669"/>
    <property type="project" value="UniProtKB-UniRule"/>
</dbReference>
<dbReference type="GO" id="GO:0006429">
    <property type="term" value="P:leucyl-tRNA aminoacylation"/>
    <property type="evidence" value="ECO:0007669"/>
    <property type="project" value="UniProtKB-UniRule"/>
</dbReference>
<dbReference type="CDD" id="cd07958">
    <property type="entry name" value="Anticodon_Ia_Leu_BEm"/>
    <property type="match status" value="1"/>
</dbReference>
<dbReference type="CDD" id="cd00812">
    <property type="entry name" value="LeuRS_core"/>
    <property type="match status" value="1"/>
</dbReference>
<dbReference type="FunFam" id="1.10.730.10:FF:000012">
    <property type="entry name" value="Leucine--tRNA ligase"/>
    <property type="match status" value="1"/>
</dbReference>
<dbReference type="FunFam" id="3.40.50.620:FF:000056">
    <property type="entry name" value="Leucine--tRNA ligase"/>
    <property type="match status" value="1"/>
</dbReference>
<dbReference type="FunFam" id="3.40.50.620:FF:000077">
    <property type="entry name" value="Leucine--tRNA ligase"/>
    <property type="match status" value="1"/>
</dbReference>
<dbReference type="FunFam" id="1.10.730.10:FF:000011">
    <property type="entry name" value="Leucine--tRNA ligase chloroplastic/mitochondrial"/>
    <property type="match status" value="1"/>
</dbReference>
<dbReference type="Gene3D" id="3.40.50.620">
    <property type="entry name" value="HUPs"/>
    <property type="match status" value="2"/>
</dbReference>
<dbReference type="Gene3D" id="1.10.730.10">
    <property type="entry name" value="Isoleucyl-tRNA Synthetase, Domain 1"/>
    <property type="match status" value="1"/>
</dbReference>
<dbReference type="Gene3D" id="3.90.740.10">
    <property type="entry name" value="Valyl/Leucyl/Isoleucyl-tRNA synthetase, editing domain"/>
    <property type="match status" value="1"/>
</dbReference>
<dbReference type="HAMAP" id="MF_00049_B">
    <property type="entry name" value="Leu_tRNA_synth_B"/>
    <property type="match status" value="1"/>
</dbReference>
<dbReference type="InterPro" id="IPR001412">
    <property type="entry name" value="aa-tRNA-synth_I_CS"/>
</dbReference>
<dbReference type="InterPro" id="IPR002300">
    <property type="entry name" value="aa-tRNA-synth_Ia"/>
</dbReference>
<dbReference type="InterPro" id="IPR002302">
    <property type="entry name" value="Leu-tRNA-ligase"/>
</dbReference>
<dbReference type="InterPro" id="IPR025709">
    <property type="entry name" value="Leu_tRNA-synth_edit"/>
</dbReference>
<dbReference type="InterPro" id="IPR013155">
    <property type="entry name" value="M/V/L/I-tRNA-synth_anticd-bd"/>
</dbReference>
<dbReference type="InterPro" id="IPR015413">
    <property type="entry name" value="Methionyl/Leucyl_tRNA_Synth"/>
</dbReference>
<dbReference type="InterPro" id="IPR014729">
    <property type="entry name" value="Rossmann-like_a/b/a_fold"/>
</dbReference>
<dbReference type="InterPro" id="IPR009080">
    <property type="entry name" value="tRNAsynth_Ia_anticodon-bd"/>
</dbReference>
<dbReference type="InterPro" id="IPR009008">
    <property type="entry name" value="Val/Leu/Ile-tRNA-synth_edit"/>
</dbReference>
<dbReference type="NCBIfam" id="TIGR00396">
    <property type="entry name" value="leuS_bact"/>
    <property type="match status" value="1"/>
</dbReference>
<dbReference type="PANTHER" id="PTHR43740:SF2">
    <property type="entry name" value="LEUCINE--TRNA LIGASE, MITOCHONDRIAL"/>
    <property type="match status" value="1"/>
</dbReference>
<dbReference type="PANTHER" id="PTHR43740">
    <property type="entry name" value="LEUCYL-TRNA SYNTHETASE"/>
    <property type="match status" value="1"/>
</dbReference>
<dbReference type="Pfam" id="PF08264">
    <property type="entry name" value="Anticodon_1"/>
    <property type="match status" value="1"/>
</dbReference>
<dbReference type="Pfam" id="PF00133">
    <property type="entry name" value="tRNA-synt_1"/>
    <property type="match status" value="2"/>
</dbReference>
<dbReference type="Pfam" id="PF13603">
    <property type="entry name" value="tRNA-synt_1_2"/>
    <property type="match status" value="1"/>
</dbReference>
<dbReference type="Pfam" id="PF09334">
    <property type="entry name" value="tRNA-synt_1g"/>
    <property type="match status" value="1"/>
</dbReference>
<dbReference type="PRINTS" id="PR00985">
    <property type="entry name" value="TRNASYNTHLEU"/>
</dbReference>
<dbReference type="SUPFAM" id="SSF47323">
    <property type="entry name" value="Anticodon-binding domain of a subclass of class I aminoacyl-tRNA synthetases"/>
    <property type="match status" value="1"/>
</dbReference>
<dbReference type="SUPFAM" id="SSF52374">
    <property type="entry name" value="Nucleotidylyl transferase"/>
    <property type="match status" value="1"/>
</dbReference>
<dbReference type="SUPFAM" id="SSF50677">
    <property type="entry name" value="ValRS/IleRS/LeuRS editing domain"/>
    <property type="match status" value="1"/>
</dbReference>
<dbReference type="PROSITE" id="PS00178">
    <property type="entry name" value="AA_TRNA_LIGASE_I"/>
    <property type="match status" value="1"/>
</dbReference>
<protein>
    <recommendedName>
        <fullName evidence="1">Leucine--tRNA ligase</fullName>
        <ecNumber evidence="1">6.1.1.4</ecNumber>
    </recommendedName>
    <alternativeName>
        <fullName evidence="1">Leucyl-tRNA synthetase</fullName>
        <shortName evidence="1">LeuRS</shortName>
    </alternativeName>
</protein>